<comment type="function">
    <text evidence="1">Transfers and isomerizes the ribose moiety from AdoMet to the 7-aminomethyl group of 7-deazaguanine (preQ1-tRNA) to give epoxyqueuosine (oQ-tRNA).</text>
</comment>
<comment type="catalytic activity">
    <reaction evidence="1">
        <text>7-aminomethyl-7-carbaguanosine(34) in tRNA + S-adenosyl-L-methionine = epoxyqueuosine(34) in tRNA + adenine + L-methionine + 2 H(+)</text>
        <dbReference type="Rhea" id="RHEA:32155"/>
        <dbReference type="Rhea" id="RHEA-COMP:10342"/>
        <dbReference type="Rhea" id="RHEA-COMP:18582"/>
        <dbReference type="ChEBI" id="CHEBI:15378"/>
        <dbReference type="ChEBI" id="CHEBI:16708"/>
        <dbReference type="ChEBI" id="CHEBI:57844"/>
        <dbReference type="ChEBI" id="CHEBI:59789"/>
        <dbReference type="ChEBI" id="CHEBI:82833"/>
        <dbReference type="ChEBI" id="CHEBI:194443"/>
        <dbReference type="EC" id="2.4.99.17"/>
    </reaction>
</comment>
<comment type="pathway">
    <text evidence="1">tRNA modification; tRNA-queuosine biosynthesis.</text>
</comment>
<comment type="subunit">
    <text evidence="1">Monomer.</text>
</comment>
<comment type="subcellular location">
    <subcellularLocation>
        <location evidence="1">Cytoplasm</location>
    </subcellularLocation>
</comment>
<comment type="similarity">
    <text evidence="1">Belongs to the QueA family.</text>
</comment>
<keyword id="KW-0963">Cytoplasm</keyword>
<keyword id="KW-0671">Queuosine biosynthesis</keyword>
<keyword id="KW-0949">S-adenosyl-L-methionine</keyword>
<keyword id="KW-0808">Transferase</keyword>
<proteinExistence type="inferred from homology"/>
<name>QUEA_RICBR</name>
<organism>
    <name type="scientific">Rickettsia bellii (strain RML369-C)</name>
    <dbReference type="NCBI Taxonomy" id="336407"/>
    <lineage>
        <taxon>Bacteria</taxon>
        <taxon>Pseudomonadati</taxon>
        <taxon>Pseudomonadota</taxon>
        <taxon>Alphaproteobacteria</taxon>
        <taxon>Rickettsiales</taxon>
        <taxon>Rickettsiaceae</taxon>
        <taxon>Rickettsieae</taxon>
        <taxon>Rickettsia</taxon>
        <taxon>belli group</taxon>
    </lineage>
</organism>
<reference key="1">
    <citation type="journal article" date="2006" name="PLoS Genet.">
        <title>Genome sequence of Rickettsia bellii illuminates the role of amoebae in gene exchanges between intracellular pathogens.</title>
        <authorList>
            <person name="Ogata H."/>
            <person name="La Scola B."/>
            <person name="Audic S."/>
            <person name="Renesto P."/>
            <person name="Blanc G."/>
            <person name="Robert C."/>
            <person name="Fournier P.-E."/>
            <person name="Claverie J.-M."/>
            <person name="Raoult D."/>
        </authorList>
    </citation>
    <scope>NUCLEOTIDE SEQUENCE [LARGE SCALE GENOMIC DNA]</scope>
    <source>
        <strain>RML369-C</strain>
    </source>
</reference>
<dbReference type="EC" id="2.4.99.17" evidence="1"/>
<dbReference type="EMBL" id="CP000087">
    <property type="protein sequence ID" value="ABE04985.1"/>
    <property type="molecule type" value="Genomic_DNA"/>
</dbReference>
<dbReference type="RefSeq" id="WP_011477568.1">
    <property type="nucleotide sequence ID" value="NC_007940.1"/>
</dbReference>
<dbReference type="SMR" id="Q1RI29"/>
<dbReference type="KEGG" id="rbe:RBE_0904"/>
<dbReference type="eggNOG" id="COG0809">
    <property type="taxonomic scope" value="Bacteria"/>
</dbReference>
<dbReference type="HOGENOM" id="CLU_039110_1_0_5"/>
<dbReference type="OrthoDB" id="9805933at2"/>
<dbReference type="UniPathway" id="UPA00392"/>
<dbReference type="Proteomes" id="UP000001951">
    <property type="component" value="Chromosome"/>
</dbReference>
<dbReference type="GO" id="GO:0005737">
    <property type="term" value="C:cytoplasm"/>
    <property type="evidence" value="ECO:0007669"/>
    <property type="project" value="UniProtKB-SubCell"/>
</dbReference>
<dbReference type="GO" id="GO:0051075">
    <property type="term" value="F:S-adenosylmethionine:tRNA ribosyltransferase-isomerase activity"/>
    <property type="evidence" value="ECO:0007669"/>
    <property type="project" value="UniProtKB-EC"/>
</dbReference>
<dbReference type="GO" id="GO:0008616">
    <property type="term" value="P:queuosine biosynthetic process"/>
    <property type="evidence" value="ECO:0007669"/>
    <property type="project" value="UniProtKB-UniRule"/>
</dbReference>
<dbReference type="GO" id="GO:0002099">
    <property type="term" value="P:tRNA wobble guanine modification"/>
    <property type="evidence" value="ECO:0007669"/>
    <property type="project" value="TreeGrafter"/>
</dbReference>
<dbReference type="FunFam" id="3.40.1780.10:FF:000001">
    <property type="entry name" value="S-adenosylmethionine:tRNA ribosyltransferase-isomerase"/>
    <property type="match status" value="1"/>
</dbReference>
<dbReference type="Gene3D" id="2.40.10.240">
    <property type="entry name" value="QueA-like"/>
    <property type="match status" value="1"/>
</dbReference>
<dbReference type="Gene3D" id="3.40.1780.10">
    <property type="entry name" value="QueA-like"/>
    <property type="match status" value="1"/>
</dbReference>
<dbReference type="HAMAP" id="MF_00113">
    <property type="entry name" value="QueA"/>
    <property type="match status" value="1"/>
</dbReference>
<dbReference type="InterPro" id="IPR003699">
    <property type="entry name" value="QueA"/>
</dbReference>
<dbReference type="InterPro" id="IPR042118">
    <property type="entry name" value="QueA_dom1"/>
</dbReference>
<dbReference type="InterPro" id="IPR042119">
    <property type="entry name" value="QueA_dom2"/>
</dbReference>
<dbReference type="InterPro" id="IPR036100">
    <property type="entry name" value="QueA_sf"/>
</dbReference>
<dbReference type="NCBIfam" id="NF001140">
    <property type="entry name" value="PRK00147.1"/>
    <property type="match status" value="1"/>
</dbReference>
<dbReference type="NCBIfam" id="TIGR00113">
    <property type="entry name" value="queA"/>
    <property type="match status" value="1"/>
</dbReference>
<dbReference type="PANTHER" id="PTHR30307">
    <property type="entry name" value="S-ADENOSYLMETHIONINE:TRNA RIBOSYLTRANSFERASE-ISOMERASE"/>
    <property type="match status" value="1"/>
</dbReference>
<dbReference type="PANTHER" id="PTHR30307:SF0">
    <property type="entry name" value="S-ADENOSYLMETHIONINE:TRNA RIBOSYLTRANSFERASE-ISOMERASE"/>
    <property type="match status" value="1"/>
</dbReference>
<dbReference type="Pfam" id="PF02547">
    <property type="entry name" value="Queuosine_synth"/>
    <property type="match status" value="1"/>
</dbReference>
<dbReference type="SUPFAM" id="SSF111337">
    <property type="entry name" value="QueA-like"/>
    <property type="match status" value="1"/>
</dbReference>
<accession>Q1RI29</accession>
<feature type="chain" id="PRO_0000277898" description="S-adenosylmethionine:tRNA ribosyltransferase-isomerase">
    <location>
        <begin position="1"/>
        <end position="353"/>
    </location>
</feature>
<protein>
    <recommendedName>
        <fullName evidence="1">S-adenosylmethionine:tRNA ribosyltransferase-isomerase</fullName>
        <ecNumber evidence="1">2.4.99.17</ecNumber>
    </recommendedName>
    <alternativeName>
        <fullName evidence="1">Queuosine biosynthesis protein QueA</fullName>
    </alternativeName>
</protein>
<sequence length="353" mass="40471">MKLSDFDFDLPLELIAQNPISKRDESNLLIASTQQYVKTKFYNIIDYLKEGDLLVFNNSKVIKAKLSLDKNITINLNQRLKDNRRATNDDAGRLKSIDYWSAFAKPARKLKVGDEFYFDNHKIIITEKLEMGEIKIKFELANISVFEFLDKYGEMPLPLYIKRPERQKSDDERYQTVYSNIQGSVAAPTAGLHFTNDIINKLKAKGVQVAFVTLHVGAGTFMPVKTENINEHKMHTEYCSITPETAAIINKAKKEKRRIIAVGTTSLRTLESSGINGNVNSGDFETDIFITPGFKFQIVDMLLTNFHFPKSTLFMLVCAFAGFKKMHELYKYAIEEQMRFFSYGDATLLYRKV</sequence>
<evidence type="ECO:0000255" key="1">
    <source>
        <dbReference type="HAMAP-Rule" id="MF_00113"/>
    </source>
</evidence>
<gene>
    <name evidence="1" type="primary">queA</name>
    <name type="ordered locus">RBE_0904</name>
</gene>